<sequence length="510" mass="58003">MGNGGRCMVEVVILLVLMAMSQGCDAQNTTGGLTRKSFPNGFVFGTASSAYQYEGAVKEDGRGPTIWDKFAHTFGKIIDFSNADVAVDQYHRFEEDIQLMADMGMDAYRFSISWSRIFPNGTGEVNQAGIDHYNKLINALLAKGIEPYVTLYHWDLPQALEDKYTGWLDRQIINDYAVYAETCFQAFGDRVKHWITFNEPHTVAVQAYDSGMHAPGRCSVLLHLYCKKGNSGTEPYIVAHNMILSHATVSDIYRKKYKASQNGELGISFDVIWYEPMSNSTADIEAAKRAQEFQLGWFADPFFFGDYPATMRSRVGSRLPKFTEKEAALVNGSLDFMGINHYTTFYTKDDQSTVIEKLLNNTLADTATISVPFRNGQPIGDRANSIWLYIVPRSMRILMNYVKDRYNKPTVYITENGMDDGNSPFISLKNALKDDKRTKYHNDYLTNLADSIREDGCDVRGYFAWSLLDNWEWAAGYTSRFGLYYVDYKNRKRYPKNSVQWFKNLLASSS</sequence>
<comment type="catalytic activity">
    <reaction evidence="2">
        <text>Hydrolysis of terminal, non-reducing beta-D-glucosyl residues with release of beta-D-glucose.</text>
        <dbReference type="EC" id="3.2.1.21"/>
    </reaction>
</comment>
<comment type="similarity">
    <text evidence="7">Belongs to the glycosyl hydrolase 1 family.</text>
</comment>
<comment type="sequence caution" evidence="7">
    <conflict type="erroneous gene model prediction">
        <sequence resource="EMBL-CDS" id="AAK92581"/>
    </conflict>
</comment>
<protein>
    <recommendedName>
        <fullName>Beta-glucosidase 34</fullName>
        <shortName>Os10bglu34</shortName>
        <ecNumber evidence="2">3.2.1.21</ecNumber>
    </recommendedName>
</protein>
<evidence type="ECO:0000250" key="1">
    <source>
        <dbReference type="UniProtKB" id="Q1XH05"/>
    </source>
</evidence>
<evidence type="ECO:0000250" key="2">
    <source>
        <dbReference type="UniProtKB" id="Q75I94"/>
    </source>
</evidence>
<evidence type="ECO:0000250" key="3">
    <source>
        <dbReference type="UniProtKB" id="Q7XSK0"/>
    </source>
</evidence>
<evidence type="ECO:0000250" key="4">
    <source>
        <dbReference type="UniProtKB" id="Q9SPP9"/>
    </source>
</evidence>
<evidence type="ECO:0000255" key="5"/>
<evidence type="ECO:0000255" key="6">
    <source>
        <dbReference type="PROSITE-ProRule" id="PRU00498"/>
    </source>
</evidence>
<evidence type="ECO:0000305" key="7"/>
<accession>Q339X2</accession>
<accession>A0A0P0XTD3</accession>
<accession>Q94HQ6</accession>
<keyword id="KW-1015">Disulfide bond</keyword>
<keyword id="KW-0325">Glycoprotein</keyword>
<keyword id="KW-0326">Glycosidase</keyword>
<keyword id="KW-0378">Hydrolase</keyword>
<keyword id="KW-1185">Reference proteome</keyword>
<keyword id="KW-0732">Signal</keyword>
<proteinExistence type="evidence at transcript level"/>
<gene>
    <name type="primary">BGLU34</name>
    <name type="ordered locus">Os10g0323500</name>
    <name type="ordered locus">LOC_Os10g17650</name>
    <name type="ORF">OsJ_31060</name>
    <name type="ORF">OSJNBa0065C16.15</name>
</gene>
<feature type="signal peptide" evidence="5">
    <location>
        <begin position="1"/>
        <end position="26"/>
    </location>
</feature>
<feature type="chain" id="PRO_0000390351" description="Beta-glucosidase 34">
    <location>
        <begin position="27"/>
        <end position="510"/>
    </location>
</feature>
<feature type="active site" description="Proton donor" evidence="3">
    <location>
        <position position="199"/>
    </location>
</feature>
<feature type="active site" description="Nucleophile" evidence="3">
    <location>
        <position position="415"/>
    </location>
</feature>
<feature type="binding site" evidence="3">
    <location>
        <position position="52"/>
    </location>
    <ligand>
        <name>a beta-D-glucoside</name>
        <dbReference type="ChEBI" id="CHEBI:22798"/>
    </ligand>
</feature>
<feature type="binding site" evidence="3">
    <location>
        <position position="153"/>
    </location>
    <ligand>
        <name>a beta-D-glucoside</name>
        <dbReference type="ChEBI" id="CHEBI:22798"/>
    </ligand>
</feature>
<feature type="binding site" evidence="3">
    <location>
        <begin position="198"/>
        <end position="199"/>
    </location>
    <ligand>
        <name>a beta-D-glucoside</name>
        <dbReference type="ChEBI" id="CHEBI:22798"/>
    </ligand>
</feature>
<feature type="binding site" evidence="3">
    <location>
        <position position="342"/>
    </location>
    <ligand>
        <name>a beta-D-glucoside</name>
        <dbReference type="ChEBI" id="CHEBI:22798"/>
    </ligand>
</feature>
<feature type="binding site" evidence="4">
    <location>
        <position position="415"/>
    </location>
    <ligand>
        <name>a beta-D-glucoside</name>
        <dbReference type="ChEBI" id="CHEBI:22798"/>
    </ligand>
</feature>
<feature type="binding site" evidence="3">
    <location>
        <position position="465"/>
    </location>
    <ligand>
        <name>a beta-D-glucoside</name>
        <dbReference type="ChEBI" id="CHEBI:22798"/>
    </ligand>
</feature>
<feature type="binding site" evidence="3">
    <location>
        <begin position="472"/>
        <end position="473"/>
    </location>
    <ligand>
        <name>a beta-D-glucoside</name>
        <dbReference type="ChEBI" id="CHEBI:22798"/>
    </ligand>
</feature>
<feature type="binding site" evidence="1">
    <location>
        <position position="481"/>
    </location>
    <ligand>
        <name>a beta-D-glucoside</name>
        <dbReference type="ChEBI" id="CHEBI:22798"/>
    </ligand>
</feature>
<feature type="glycosylation site" description="N-linked (GlcNAc...) asparagine" evidence="6">
    <location>
        <position position="28"/>
    </location>
</feature>
<feature type="glycosylation site" description="N-linked (GlcNAc...) asparagine" evidence="6">
    <location>
        <position position="120"/>
    </location>
</feature>
<feature type="glycosylation site" description="N-linked (GlcNAc...) asparagine" evidence="6">
    <location>
        <position position="279"/>
    </location>
</feature>
<feature type="glycosylation site" description="N-linked (GlcNAc...) asparagine" evidence="6">
    <location>
        <position position="331"/>
    </location>
</feature>
<feature type="glycosylation site" description="N-linked (GlcNAc...) asparagine" evidence="6">
    <location>
        <position position="360"/>
    </location>
</feature>
<feature type="disulfide bond" evidence="3">
    <location>
        <begin position="218"/>
        <end position="226"/>
    </location>
</feature>
<reference key="1">
    <citation type="journal article" date="2003" name="Science">
        <title>In-depth view of structure, activity, and evolution of rice chromosome 10.</title>
        <authorList>
            <person name="Yu Y."/>
            <person name="Rambo T."/>
            <person name="Currie J."/>
            <person name="Saski C."/>
            <person name="Kim H.-R."/>
            <person name="Collura K."/>
            <person name="Thompson S."/>
            <person name="Simmons J."/>
            <person name="Yang T.-J."/>
            <person name="Nah G."/>
            <person name="Patel A.J."/>
            <person name="Thurmond S."/>
            <person name="Henry D."/>
            <person name="Oates R."/>
            <person name="Palmer M."/>
            <person name="Pries G."/>
            <person name="Gibson J."/>
            <person name="Anderson H."/>
            <person name="Paradkar M."/>
            <person name="Crane L."/>
            <person name="Dale J."/>
            <person name="Carver M.B."/>
            <person name="Wood T."/>
            <person name="Frisch D."/>
            <person name="Engler F."/>
            <person name="Soderlund C."/>
            <person name="Palmer L.E."/>
            <person name="Teytelman L."/>
            <person name="Nascimento L."/>
            <person name="De la Bastide M."/>
            <person name="Spiegel L."/>
            <person name="Ware D."/>
            <person name="O'Shaughnessy A."/>
            <person name="Dike S."/>
            <person name="Dedhia N."/>
            <person name="Preston R."/>
            <person name="Huang E."/>
            <person name="Ferraro K."/>
            <person name="Kuit K."/>
            <person name="Miller B."/>
            <person name="Zutavern T."/>
            <person name="Katzenberger F."/>
            <person name="Muller S."/>
            <person name="Balija V."/>
            <person name="Martienssen R.A."/>
            <person name="Stein L."/>
            <person name="Minx P."/>
            <person name="Johnson D."/>
            <person name="Cordum H."/>
            <person name="Mardis E."/>
            <person name="Cheng Z."/>
            <person name="Jiang J."/>
            <person name="Wilson R."/>
            <person name="McCombie W.R."/>
            <person name="Wing R.A."/>
            <person name="Yuan Q."/>
            <person name="Ouyang S."/>
            <person name="Liu J."/>
            <person name="Jones K.M."/>
            <person name="Gansberger K."/>
            <person name="Moffat K."/>
            <person name="Hill J."/>
            <person name="Tsitrin T."/>
            <person name="Overton L."/>
            <person name="Bera J."/>
            <person name="Kim M."/>
            <person name="Jin S."/>
            <person name="Tallon L."/>
            <person name="Ciecko A."/>
            <person name="Pai G."/>
            <person name="Van Aken S."/>
            <person name="Utterback T."/>
            <person name="Reidmuller S."/>
            <person name="Bormann J."/>
            <person name="Feldblyum T."/>
            <person name="Hsiao J."/>
            <person name="Zismann V."/>
            <person name="Blunt S."/>
            <person name="de Vazeille A.R."/>
            <person name="Shaffer T."/>
            <person name="Koo H."/>
            <person name="Suh B."/>
            <person name="Yang Q."/>
            <person name="Haas B."/>
            <person name="Peterson J."/>
            <person name="Pertea M."/>
            <person name="Volfovsky N."/>
            <person name="Wortman J."/>
            <person name="White O."/>
            <person name="Salzberg S.L."/>
            <person name="Fraser C.M."/>
            <person name="Buell C.R."/>
            <person name="Messing J."/>
            <person name="Song R."/>
            <person name="Fuks G."/>
            <person name="Llaca V."/>
            <person name="Kovchak S."/>
            <person name="Young S."/>
            <person name="Bowers J.E."/>
            <person name="Paterson A.H."/>
            <person name="Johns M.A."/>
            <person name="Mao L."/>
            <person name="Pan H."/>
            <person name="Dean R.A."/>
        </authorList>
    </citation>
    <scope>NUCLEOTIDE SEQUENCE [LARGE SCALE GENOMIC DNA]</scope>
    <source>
        <strain>cv. Nipponbare</strain>
    </source>
</reference>
<reference key="2">
    <citation type="journal article" date="2005" name="Nature">
        <title>The map-based sequence of the rice genome.</title>
        <authorList>
            <consortium name="International rice genome sequencing project (IRGSP)"/>
        </authorList>
    </citation>
    <scope>NUCLEOTIDE SEQUENCE [LARGE SCALE GENOMIC DNA]</scope>
    <source>
        <strain>cv. Nipponbare</strain>
    </source>
</reference>
<reference key="3">
    <citation type="journal article" date="2008" name="Nucleic Acids Res.">
        <title>The rice annotation project database (RAP-DB): 2008 update.</title>
        <authorList>
            <consortium name="The rice annotation project (RAP)"/>
        </authorList>
    </citation>
    <scope>GENOME REANNOTATION</scope>
    <source>
        <strain>cv. Nipponbare</strain>
    </source>
</reference>
<reference key="4">
    <citation type="journal article" date="2013" name="Rice">
        <title>Improvement of the Oryza sativa Nipponbare reference genome using next generation sequence and optical map data.</title>
        <authorList>
            <person name="Kawahara Y."/>
            <person name="de la Bastide M."/>
            <person name="Hamilton J.P."/>
            <person name="Kanamori H."/>
            <person name="McCombie W.R."/>
            <person name="Ouyang S."/>
            <person name="Schwartz D.C."/>
            <person name="Tanaka T."/>
            <person name="Wu J."/>
            <person name="Zhou S."/>
            <person name="Childs K.L."/>
            <person name="Davidson R.M."/>
            <person name="Lin H."/>
            <person name="Quesada-Ocampo L."/>
            <person name="Vaillancourt B."/>
            <person name="Sakai H."/>
            <person name="Lee S.S."/>
            <person name="Kim J."/>
            <person name="Numa H."/>
            <person name="Itoh T."/>
            <person name="Buell C.R."/>
            <person name="Matsumoto T."/>
        </authorList>
    </citation>
    <scope>GENOME REANNOTATION</scope>
    <source>
        <strain>cv. Nipponbare</strain>
    </source>
</reference>
<reference key="5">
    <citation type="journal article" date="2005" name="PLoS Biol.">
        <title>The genomes of Oryza sativa: a history of duplications.</title>
        <authorList>
            <person name="Yu J."/>
            <person name="Wang J."/>
            <person name="Lin W."/>
            <person name="Li S."/>
            <person name="Li H."/>
            <person name="Zhou J."/>
            <person name="Ni P."/>
            <person name="Dong W."/>
            <person name="Hu S."/>
            <person name="Zeng C."/>
            <person name="Zhang J."/>
            <person name="Zhang Y."/>
            <person name="Li R."/>
            <person name="Xu Z."/>
            <person name="Li S."/>
            <person name="Li X."/>
            <person name="Zheng H."/>
            <person name="Cong L."/>
            <person name="Lin L."/>
            <person name="Yin J."/>
            <person name="Geng J."/>
            <person name="Li G."/>
            <person name="Shi J."/>
            <person name="Liu J."/>
            <person name="Lv H."/>
            <person name="Li J."/>
            <person name="Wang J."/>
            <person name="Deng Y."/>
            <person name="Ran L."/>
            <person name="Shi X."/>
            <person name="Wang X."/>
            <person name="Wu Q."/>
            <person name="Li C."/>
            <person name="Ren X."/>
            <person name="Wang J."/>
            <person name="Wang X."/>
            <person name="Li D."/>
            <person name="Liu D."/>
            <person name="Zhang X."/>
            <person name="Ji Z."/>
            <person name="Zhao W."/>
            <person name="Sun Y."/>
            <person name="Zhang Z."/>
            <person name="Bao J."/>
            <person name="Han Y."/>
            <person name="Dong L."/>
            <person name="Ji J."/>
            <person name="Chen P."/>
            <person name="Wu S."/>
            <person name="Liu J."/>
            <person name="Xiao Y."/>
            <person name="Bu D."/>
            <person name="Tan J."/>
            <person name="Yang L."/>
            <person name="Ye C."/>
            <person name="Zhang J."/>
            <person name="Xu J."/>
            <person name="Zhou Y."/>
            <person name="Yu Y."/>
            <person name="Zhang B."/>
            <person name="Zhuang S."/>
            <person name="Wei H."/>
            <person name="Liu B."/>
            <person name="Lei M."/>
            <person name="Yu H."/>
            <person name="Li Y."/>
            <person name="Xu H."/>
            <person name="Wei S."/>
            <person name="He X."/>
            <person name="Fang L."/>
            <person name="Zhang Z."/>
            <person name="Zhang Y."/>
            <person name="Huang X."/>
            <person name="Su Z."/>
            <person name="Tong W."/>
            <person name="Li J."/>
            <person name="Tong Z."/>
            <person name="Li S."/>
            <person name="Ye J."/>
            <person name="Wang L."/>
            <person name="Fang L."/>
            <person name="Lei T."/>
            <person name="Chen C.-S."/>
            <person name="Chen H.-C."/>
            <person name="Xu Z."/>
            <person name="Li H."/>
            <person name="Huang H."/>
            <person name="Zhang F."/>
            <person name="Xu H."/>
            <person name="Li N."/>
            <person name="Zhao C."/>
            <person name="Li S."/>
            <person name="Dong L."/>
            <person name="Huang Y."/>
            <person name="Li L."/>
            <person name="Xi Y."/>
            <person name="Qi Q."/>
            <person name="Li W."/>
            <person name="Zhang B."/>
            <person name="Hu W."/>
            <person name="Zhang Y."/>
            <person name="Tian X."/>
            <person name="Jiao Y."/>
            <person name="Liang X."/>
            <person name="Jin J."/>
            <person name="Gao L."/>
            <person name="Zheng W."/>
            <person name="Hao B."/>
            <person name="Liu S.-M."/>
            <person name="Wang W."/>
            <person name="Yuan L."/>
            <person name="Cao M."/>
            <person name="McDermott J."/>
            <person name="Samudrala R."/>
            <person name="Wang J."/>
            <person name="Wong G.K.-S."/>
            <person name="Yang H."/>
        </authorList>
    </citation>
    <scope>NUCLEOTIDE SEQUENCE [LARGE SCALE GENOMIC DNA]</scope>
    <source>
        <strain>cv. Nipponbare</strain>
    </source>
</reference>
<reference key="6">
    <citation type="journal article" date="2003" name="Science">
        <title>Collection, mapping, and annotation of over 28,000 cDNA clones from japonica rice.</title>
        <authorList>
            <consortium name="The rice full-length cDNA consortium"/>
        </authorList>
    </citation>
    <scope>NUCLEOTIDE SEQUENCE [LARGE SCALE MRNA]</scope>
    <source>
        <strain>cv. Nipponbare</strain>
    </source>
</reference>
<reference key="7">
    <citation type="journal article" date="2006" name="BMC Plant Biol.">
        <title>Analysis of rice glycosyl hydrolase family 1 and expression of Os4bglu12 beta-glucosidase.</title>
        <authorList>
            <person name="Opassiri R."/>
            <person name="Pomthong B."/>
            <person name="Onkoksoong T."/>
            <person name="Akiyama T."/>
            <person name="Esen A."/>
            <person name="Ketudat Cairns J.R."/>
        </authorList>
    </citation>
    <scope>GENE FAMILY</scope>
    <scope>NOMENCLATURE</scope>
</reference>
<name>BGL34_ORYSJ</name>
<organism>
    <name type="scientific">Oryza sativa subsp. japonica</name>
    <name type="common">Rice</name>
    <dbReference type="NCBI Taxonomy" id="39947"/>
    <lineage>
        <taxon>Eukaryota</taxon>
        <taxon>Viridiplantae</taxon>
        <taxon>Streptophyta</taxon>
        <taxon>Embryophyta</taxon>
        <taxon>Tracheophyta</taxon>
        <taxon>Spermatophyta</taxon>
        <taxon>Magnoliopsida</taxon>
        <taxon>Liliopsida</taxon>
        <taxon>Poales</taxon>
        <taxon>Poaceae</taxon>
        <taxon>BOP clade</taxon>
        <taxon>Oryzoideae</taxon>
        <taxon>Oryzeae</taxon>
        <taxon>Oryzinae</taxon>
        <taxon>Oryza</taxon>
        <taxon>Oryza sativa</taxon>
    </lineage>
</organism>
<dbReference type="EC" id="3.2.1.21" evidence="2"/>
<dbReference type="EMBL" id="AC074354">
    <property type="protein sequence ID" value="AAK92581.1"/>
    <property type="status" value="ALT_SEQ"/>
    <property type="molecule type" value="Genomic_DNA"/>
</dbReference>
<dbReference type="EMBL" id="DP000086">
    <property type="protein sequence ID" value="ABB47155.1"/>
    <property type="molecule type" value="Genomic_DNA"/>
</dbReference>
<dbReference type="EMBL" id="AP008216">
    <property type="protein sequence ID" value="BAF26261.1"/>
    <property type="molecule type" value="Genomic_DNA"/>
</dbReference>
<dbReference type="EMBL" id="AP014966">
    <property type="protein sequence ID" value="BAT10320.1"/>
    <property type="molecule type" value="Genomic_DNA"/>
</dbReference>
<dbReference type="EMBL" id="CM000147">
    <property type="protein sequence ID" value="EEE50740.1"/>
    <property type="molecule type" value="Genomic_DNA"/>
</dbReference>
<dbReference type="EMBL" id="AK071372">
    <property type="protein sequence ID" value="BAG92457.1"/>
    <property type="molecule type" value="mRNA"/>
</dbReference>
<dbReference type="RefSeq" id="XP_015613193.1">
    <property type="nucleotide sequence ID" value="XM_015757707.1"/>
</dbReference>
<dbReference type="SMR" id="Q339X2"/>
<dbReference type="FunCoup" id="Q339X2">
    <property type="interactions" value="633"/>
</dbReference>
<dbReference type="STRING" id="39947.Q339X2"/>
<dbReference type="CAZy" id="GH1">
    <property type="family name" value="Glycoside Hydrolase Family 1"/>
</dbReference>
<dbReference type="GlyCosmos" id="Q339X2">
    <property type="glycosylation" value="5 sites, No reported glycans"/>
</dbReference>
<dbReference type="PaxDb" id="39947-Q339X2"/>
<dbReference type="EnsemblPlants" id="Os10t0323500-01">
    <property type="protein sequence ID" value="Os10t0323500-01"/>
    <property type="gene ID" value="Os10g0323500"/>
</dbReference>
<dbReference type="Gramene" id="Os10t0323500-01">
    <property type="protein sequence ID" value="Os10t0323500-01"/>
    <property type="gene ID" value="Os10g0323500"/>
</dbReference>
<dbReference type="KEGG" id="dosa:Os10g0323500"/>
<dbReference type="eggNOG" id="KOG0626">
    <property type="taxonomic scope" value="Eukaryota"/>
</dbReference>
<dbReference type="HOGENOM" id="CLU_001859_1_3_1"/>
<dbReference type="InParanoid" id="Q339X2"/>
<dbReference type="OMA" id="IAHEINP"/>
<dbReference type="OrthoDB" id="65569at2759"/>
<dbReference type="Proteomes" id="UP000000763">
    <property type="component" value="Chromosome 10"/>
</dbReference>
<dbReference type="Proteomes" id="UP000007752">
    <property type="component" value="Chromosome 10"/>
</dbReference>
<dbReference type="Proteomes" id="UP000059680">
    <property type="component" value="Chromosome 10"/>
</dbReference>
<dbReference type="GO" id="GO:0033907">
    <property type="term" value="F:beta-D-fucosidase activity"/>
    <property type="evidence" value="ECO:0007669"/>
    <property type="project" value="UniProtKB-ARBA"/>
</dbReference>
<dbReference type="GO" id="GO:0004565">
    <property type="term" value="F:beta-galactosidase activity"/>
    <property type="evidence" value="ECO:0007669"/>
    <property type="project" value="UniProtKB-ARBA"/>
</dbReference>
<dbReference type="GO" id="GO:0008422">
    <property type="term" value="F:beta-glucosidase activity"/>
    <property type="evidence" value="ECO:0000318"/>
    <property type="project" value="GO_Central"/>
</dbReference>
<dbReference type="GO" id="GO:0005975">
    <property type="term" value="P:carbohydrate metabolic process"/>
    <property type="evidence" value="ECO:0007669"/>
    <property type="project" value="InterPro"/>
</dbReference>
<dbReference type="FunFam" id="3.20.20.80:FF:000020">
    <property type="entry name" value="Beta-glucosidase 12"/>
    <property type="match status" value="1"/>
</dbReference>
<dbReference type="Gene3D" id="3.20.20.80">
    <property type="entry name" value="Glycosidases"/>
    <property type="match status" value="1"/>
</dbReference>
<dbReference type="InterPro" id="IPR001360">
    <property type="entry name" value="Glyco_hydro_1"/>
</dbReference>
<dbReference type="InterPro" id="IPR033132">
    <property type="entry name" value="Glyco_hydro_1_N_CS"/>
</dbReference>
<dbReference type="InterPro" id="IPR017853">
    <property type="entry name" value="Glycoside_hydrolase_SF"/>
</dbReference>
<dbReference type="PANTHER" id="PTHR10353:SF302">
    <property type="entry name" value="BETA-GLUCOSIDASE 40"/>
    <property type="match status" value="1"/>
</dbReference>
<dbReference type="PANTHER" id="PTHR10353">
    <property type="entry name" value="GLYCOSYL HYDROLASE"/>
    <property type="match status" value="1"/>
</dbReference>
<dbReference type="Pfam" id="PF00232">
    <property type="entry name" value="Glyco_hydro_1"/>
    <property type="match status" value="1"/>
</dbReference>
<dbReference type="PRINTS" id="PR00131">
    <property type="entry name" value="GLHYDRLASE1"/>
</dbReference>
<dbReference type="SUPFAM" id="SSF51445">
    <property type="entry name" value="(Trans)glycosidases"/>
    <property type="match status" value="1"/>
</dbReference>
<dbReference type="PROSITE" id="PS00653">
    <property type="entry name" value="GLYCOSYL_HYDROL_F1_2"/>
    <property type="match status" value="1"/>
</dbReference>